<sequence>MKKTKDIGICAIDIYFPQTYVNQSELKKYDKVSNGKYTIGLGQTNMSFVGDREDIVSMAMTSVKMMMSKYSIDYQSIGRLEVGTETIIDKSKSVKSSIMSLFQEYGNTSLEGVDTLNACYGGTNALFNSLQWIESSYWDGRYALVVTGDIAVYSKGAARPTGGAGVVTMLIGPNATLIFDQSLRGTHMENVNDFYKPDLSSEYPYVDGKLSIECYLRALDKCYLEYKKKFESINDDNKFSMDSFDYVCFHSPYNRLVQKSYARLIYNDFLQNPNNPKYQDLLPFKDLSTGKDSYINSKLDQITLKLSLDDFKTKVNPSTLLSKECGNSYCGSVYSGILSLLSNVNDLNNKKVLVFSYGSGLAASLFSFRINNNKNRNNNNNNNNCFFKTTNDIGKISNIKERLSNRVKVSPEEFTRILDIREKSHQMVGARTPIDTLDYISAGTFYLEKIDEKLIRHYKSKPIISSKL</sequence>
<protein>
    <recommendedName>
        <fullName>Hydroxymethylglutaryl-CoA synthase B</fullName>
        <shortName>HMG-CoA synthase B</shortName>
        <ecNumber>2.3.3.10</ecNumber>
    </recommendedName>
    <alternativeName>
        <fullName>3-hydroxy-3-methylglutaryl coenzyme A synthase B</fullName>
    </alternativeName>
</protein>
<comment type="function">
    <text evidence="1">Condenses acetyl-CoA with acetoacetyl-CoA to form HMG-CoA, which is the substrate for HMG-CoA reductase.</text>
</comment>
<comment type="catalytic activity">
    <reaction>
        <text>acetoacetyl-CoA + acetyl-CoA + H2O = (3S)-3-hydroxy-3-methylglutaryl-CoA + CoA + H(+)</text>
        <dbReference type="Rhea" id="RHEA:10188"/>
        <dbReference type="ChEBI" id="CHEBI:15377"/>
        <dbReference type="ChEBI" id="CHEBI:15378"/>
        <dbReference type="ChEBI" id="CHEBI:43074"/>
        <dbReference type="ChEBI" id="CHEBI:57286"/>
        <dbReference type="ChEBI" id="CHEBI:57287"/>
        <dbReference type="ChEBI" id="CHEBI:57288"/>
        <dbReference type="EC" id="2.3.3.10"/>
    </reaction>
</comment>
<comment type="pathway">
    <text>Metabolic intermediate biosynthesis; (R)-mevalonate biosynthesis; (R)-mevalonate from acetyl-CoA: step 2/3.</text>
</comment>
<comment type="similarity">
    <text evidence="3">Belongs to the thiolase-like superfamily. HMG-CoA synthase family.</text>
</comment>
<proteinExistence type="inferred from homology"/>
<accession>Q86HL5</accession>
<accession>Q555J1</accession>
<reference key="1">
    <citation type="journal article" date="2002" name="Nature">
        <title>Sequence and analysis of chromosome 2 of Dictyostelium discoideum.</title>
        <authorList>
            <person name="Gloeckner G."/>
            <person name="Eichinger L."/>
            <person name="Szafranski K."/>
            <person name="Pachebat J.A."/>
            <person name="Bankier A.T."/>
            <person name="Dear P.H."/>
            <person name="Lehmann R."/>
            <person name="Baumgart C."/>
            <person name="Parra G."/>
            <person name="Abril J.F."/>
            <person name="Guigo R."/>
            <person name="Kumpf K."/>
            <person name="Tunggal B."/>
            <person name="Cox E.C."/>
            <person name="Quail M.A."/>
            <person name="Platzer M."/>
            <person name="Rosenthal A."/>
            <person name="Noegel A.A."/>
        </authorList>
    </citation>
    <scope>NUCLEOTIDE SEQUENCE [LARGE SCALE GENOMIC DNA]</scope>
    <source>
        <strain>AX4</strain>
    </source>
</reference>
<reference key="2">
    <citation type="journal article" date="2005" name="Nature">
        <title>The genome of the social amoeba Dictyostelium discoideum.</title>
        <authorList>
            <person name="Eichinger L."/>
            <person name="Pachebat J.A."/>
            <person name="Gloeckner G."/>
            <person name="Rajandream M.A."/>
            <person name="Sucgang R."/>
            <person name="Berriman M."/>
            <person name="Song J."/>
            <person name="Olsen R."/>
            <person name="Szafranski K."/>
            <person name="Xu Q."/>
            <person name="Tunggal B."/>
            <person name="Kummerfeld S."/>
            <person name="Madera M."/>
            <person name="Konfortov B.A."/>
            <person name="Rivero F."/>
            <person name="Bankier A.T."/>
            <person name="Lehmann R."/>
            <person name="Hamlin N."/>
            <person name="Davies R."/>
            <person name="Gaudet P."/>
            <person name="Fey P."/>
            <person name="Pilcher K."/>
            <person name="Chen G."/>
            <person name="Saunders D."/>
            <person name="Sodergren E.J."/>
            <person name="Davis P."/>
            <person name="Kerhornou A."/>
            <person name="Nie X."/>
            <person name="Hall N."/>
            <person name="Anjard C."/>
            <person name="Hemphill L."/>
            <person name="Bason N."/>
            <person name="Farbrother P."/>
            <person name="Desany B."/>
            <person name="Just E."/>
            <person name="Morio T."/>
            <person name="Rost R."/>
            <person name="Churcher C.M."/>
            <person name="Cooper J."/>
            <person name="Haydock S."/>
            <person name="van Driessche N."/>
            <person name="Cronin A."/>
            <person name="Goodhead I."/>
            <person name="Muzny D.M."/>
            <person name="Mourier T."/>
            <person name="Pain A."/>
            <person name="Lu M."/>
            <person name="Harper D."/>
            <person name="Lindsay R."/>
            <person name="Hauser H."/>
            <person name="James K.D."/>
            <person name="Quiles M."/>
            <person name="Madan Babu M."/>
            <person name="Saito T."/>
            <person name="Buchrieser C."/>
            <person name="Wardroper A."/>
            <person name="Felder M."/>
            <person name="Thangavelu M."/>
            <person name="Johnson D."/>
            <person name="Knights A."/>
            <person name="Loulseged H."/>
            <person name="Mungall K.L."/>
            <person name="Oliver K."/>
            <person name="Price C."/>
            <person name="Quail M.A."/>
            <person name="Urushihara H."/>
            <person name="Hernandez J."/>
            <person name="Rabbinowitsch E."/>
            <person name="Steffen D."/>
            <person name="Sanders M."/>
            <person name="Ma J."/>
            <person name="Kohara Y."/>
            <person name="Sharp S."/>
            <person name="Simmonds M.N."/>
            <person name="Spiegler S."/>
            <person name="Tivey A."/>
            <person name="Sugano S."/>
            <person name="White B."/>
            <person name="Walker D."/>
            <person name="Woodward J.R."/>
            <person name="Winckler T."/>
            <person name="Tanaka Y."/>
            <person name="Shaulsky G."/>
            <person name="Schleicher M."/>
            <person name="Weinstock G.M."/>
            <person name="Rosenthal A."/>
            <person name="Cox E.C."/>
            <person name="Chisholm R.L."/>
            <person name="Gibbs R.A."/>
            <person name="Loomis W.F."/>
            <person name="Platzer M."/>
            <person name="Kay R.R."/>
            <person name="Williams J.G."/>
            <person name="Dear P.H."/>
            <person name="Noegel A.A."/>
            <person name="Barrell B.G."/>
            <person name="Kuspa A."/>
        </authorList>
    </citation>
    <scope>NUCLEOTIDE SEQUENCE [LARGE SCALE GENOMIC DNA]</scope>
    <source>
        <strain>AX4</strain>
    </source>
</reference>
<organism>
    <name type="scientific">Dictyostelium discoideum</name>
    <name type="common">Social amoeba</name>
    <dbReference type="NCBI Taxonomy" id="44689"/>
    <lineage>
        <taxon>Eukaryota</taxon>
        <taxon>Amoebozoa</taxon>
        <taxon>Evosea</taxon>
        <taxon>Eumycetozoa</taxon>
        <taxon>Dictyostelia</taxon>
        <taxon>Dictyosteliales</taxon>
        <taxon>Dictyosteliaceae</taxon>
        <taxon>Dictyostelium</taxon>
    </lineage>
</organism>
<dbReference type="EC" id="2.3.3.10"/>
<dbReference type="EMBL" id="AAFI02000012">
    <property type="protein sequence ID" value="EAL70328.1"/>
    <property type="molecule type" value="Genomic_DNA"/>
</dbReference>
<dbReference type="RefSeq" id="XP_644076.1">
    <property type="nucleotide sequence ID" value="XM_638984.1"/>
</dbReference>
<dbReference type="SMR" id="Q86HL5"/>
<dbReference type="FunCoup" id="Q86HL5">
    <property type="interactions" value="482"/>
</dbReference>
<dbReference type="STRING" id="44689.Q86HL5"/>
<dbReference type="PaxDb" id="44689-DDB0217522"/>
<dbReference type="EnsemblProtists" id="EAL70328">
    <property type="protein sequence ID" value="EAL70328"/>
    <property type="gene ID" value="DDB_G0274871"/>
</dbReference>
<dbReference type="GeneID" id="8619505"/>
<dbReference type="KEGG" id="ddi:DDB_G0274871"/>
<dbReference type="dictyBase" id="DDB_G0274871">
    <property type="gene designation" value="hgsB"/>
</dbReference>
<dbReference type="VEuPathDB" id="AmoebaDB:DDB_G0274871"/>
<dbReference type="eggNOG" id="KOG1393">
    <property type="taxonomic scope" value="Eukaryota"/>
</dbReference>
<dbReference type="HOGENOM" id="CLU_008065_0_1_1"/>
<dbReference type="InParanoid" id="Q86HL5"/>
<dbReference type="OMA" id="ARNGNMY"/>
<dbReference type="PhylomeDB" id="Q86HL5"/>
<dbReference type="Reactome" id="R-DDI-191273">
    <property type="pathway name" value="Cholesterol biosynthesis"/>
</dbReference>
<dbReference type="Reactome" id="R-DDI-77111">
    <property type="pathway name" value="Synthesis of Ketone Bodies"/>
</dbReference>
<dbReference type="Reactome" id="R-DDI-9837999">
    <property type="pathway name" value="Mitochondrial protein degradation"/>
</dbReference>
<dbReference type="UniPathway" id="UPA00058">
    <property type="reaction ID" value="UER00102"/>
</dbReference>
<dbReference type="PRO" id="PR:Q86HL5"/>
<dbReference type="Proteomes" id="UP000002195">
    <property type="component" value="Chromosome 2"/>
</dbReference>
<dbReference type="GO" id="GO:0004421">
    <property type="term" value="F:hydroxymethylglutaryl-CoA synthase activity"/>
    <property type="evidence" value="ECO:0000318"/>
    <property type="project" value="GO_Central"/>
</dbReference>
<dbReference type="GO" id="GO:0006084">
    <property type="term" value="P:acetyl-CoA metabolic process"/>
    <property type="evidence" value="ECO:0000318"/>
    <property type="project" value="GO_Central"/>
</dbReference>
<dbReference type="GO" id="GO:0010142">
    <property type="term" value="P:farnesyl diphosphate biosynthetic process, mevalonate pathway"/>
    <property type="evidence" value="ECO:0000318"/>
    <property type="project" value="GO_Central"/>
</dbReference>
<dbReference type="GO" id="GO:0044351">
    <property type="term" value="P:macropinocytosis"/>
    <property type="evidence" value="ECO:0000316"/>
    <property type="project" value="dictyBase"/>
</dbReference>
<dbReference type="GO" id="GO:0016126">
    <property type="term" value="P:sterol biosynthetic process"/>
    <property type="evidence" value="ECO:0007669"/>
    <property type="project" value="UniProtKB-KW"/>
</dbReference>
<dbReference type="CDD" id="cd00827">
    <property type="entry name" value="init_cond_enzymes"/>
    <property type="match status" value="1"/>
</dbReference>
<dbReference type="FunFam" id="3.40.47.10:FF:000129">
    <property type="entry name" value="3-hydroxy-3-methylglutaryl coenzyme A synthase"/>
    <property type="match status" value="1"/>
</dbReference>
<dbReference type="Gene3D" id="3.40.47.10">
    <property type="match status" value="1"/>
</dbReference>
<dbReference type="InterPro" id="IPR013746">
    <property type="entry name" value="HMG_CoA_synt_C_dom"/>
</dbReference>
<dbReference type="InterPro" id="IPR013528">
    <property type="entry name" value="HMG_CoA_synth_N"/>
</dbReference>
<dbReference type="InterPro" id="IPR010122">
    <property type="entry name" value="HMG_CoA_synthase_euk"/>
</dbReference>
<dbReference type="InterPro" id="IPR016039">
    <property type="entry name" value="Thiolase-like"/>
</dbReference>
<dbReference type="NCBIfam" id="TIGR01833">
    <property type="entry name" value="HMG-CoA-S_euk"/>
    <property type="match status" value="1"/>
</dbReference>
<dbReference type="PANTHER" id="PTHR43323">
    <property type="entry name" value="3-HYDROXY-3-METHYLGLUTARYL COENZYME A SYNTHASE"/>
    <property type="match status" value="1"/>
</dbReference>
<dbReference type="PANTHER" id="PTHR43323:SF2">
    <property type="entry name" value="HYDROXYMETHYLGLUTARYL-COA SYNTHASE"/>
    <property type="match status" value="1"/>
</dbReference>
<dbReference type="Pfam" id="PF08540">
    <property type="entry name" value="HMG_CoA_synt_C"/>
    <property type="match status" value="1"/>
</dbReference>
<dbReference type="Pfam" id="PF01154">
    <property type="entry name" value="HMG_CoA_synt_N"/>
    <property type="match status" value="1"/>
</dbReference>
<dbReference type="SUPFAM" id="SSF53901">
    <property type="entry name" value="Thiolase-like"/>
    <property type="match status" value="2"/>
</dbReference>
<gene>
    <name type="primary">hgsB</name>
    <name type="ORF">DDB_G0274871</name>
</gene>
<name>HMCSB_DICDI</name>
<feature type="chain" id="PRO_0000340242" description="Hydroxymethylglutaryl-CoA synthase B">
    <location>
        <begin position="1"/>
        <end position="468"/>
    </location>
</feature>
<feature type="active site" description="Proton donor/acceptor" evidence="1">
    <location>
        <position position="85"/>
    </location>
</feature>
<feature type="active site" description="Acyl-thioester intermediate" evidence="1">
    <location>
        <position position="119"/>
    </location>
</feature>
<feature type="active site" description="Proton donor/acceptor" evidence="1">
    <location>
        <position position="250"/>
    </location>
</feature>
<feature type="binding site" evidence="2">
    <location>
        <position position="119"/>
    </location>
    <ligand>
        <name>(3S)-3-hydroxy-3-methylglutaryl-CoA</name>
        <dbReference type="ChEBI" id="CHEBI:43074"/>
    </ligand>
</feature>
<feature type="binding site" evidence="2">
    <location>
        <position position="161"/>
    </location>
    <ligand>
        <name>(3S)-3-hydroxy-3-methylglutaryl-CoA</name>
        <dbReference type="ChEBI" id="CHEBI:43074"/>
    </ligand>
</feature>
<feature type="binding site" evidence="2">
    <location>
        <position position="211"/>
    </location>
    <ligand>
        <name>(3S)-3-hydroxy-3-methylglutaryl-CoA</name>
        <dbReference type="ChEBI" id="CHEBI:43074"/>
    </ligand>
</feature>
<feature type="binding site" evidence="2">
    <location>
        <position position="250"/>
    </location>
    <ligand>
        <name>(3S)-3-hydroxy-3-methylglutaryl-CoA</name>
        <dbReference type="ChEBI" id="CHEBI:43074"/>
    </ligand>
</feature>
<feature type="binding site" evidence="2">
    <location>
        <position position="259"/>
    </location>
    <ligand>
        <name>(3S)-3-hydroxy-3-methylglutaryl-CoA</name>
        <dbReference type="ChEBI" id="CHEBI:43074"/>
    </ligand>
</feature>
<feature type="binding site" evidence="2">
    <location>
        <position position="327"/>
    </location>
    <ligand>
        <name>(3S)-3-hydroxy-3-methylglutaryl-CoA</name>
        <dbReference type="ChEBI" id="CHEBI:43074"/>
    </ligand>
</feature>
<feature type="binding site" evidence="2">
    <location>
        <position position="359"/>
    </location>
    <ligand>
        <name>(3S)-3-hydroxy-3-methylglutaryl-CoA</name>
        <dbReference type="ChEBI" id="CHEBI:43074"/>
    </ligand>
</feature>
<evidence type="ECO:0000250" key="1"/>
<evidence type="ECO:0000250" key="2">
    <source>
        <dbReference type="UniProtKB" id="P54868"/>
    </source>
</evidence>
<evidence type="ECO:0000305" key="3"/>
<keyword id="KW-0444">Lipid biosynthesis</keyword>
<keyword id="KW-0443">Lipid metabolism</keyword>
<keyword id="KW-1185">Reference proteome</keyword>
<keyword id="KW-0752">Steroid biosynthesis</keyword>
<keyword id="KW-0753">Steroid metabolism</keyword>
<keyword id="KW-0756">Sterol biosynthesis</keyword>
<keyword id="KW-1207">Sterol metabolism</keyword>
<keyword id="KW-0808">Transferase</keyword>